<accession>Q6T1X6</accession>
<comment type="function">
    <text evidence="1 2">Reductase that catalyzes the conversion of GDP-6-deoxy-D-mannose to GDP-4-dehydro-6-deoxy-D-mannose (GDP-D-rhamnose).</text>
</comment>
<comment type="catalytic activity">
    <reaction evidence="1 2">
        <text>GDP-alpha-D-rhamnose + NAD(+) = GDP-4-dehydro-alpha-D-rhamnose + NADH + H(+)</text>
        <dbReference type="Rhea" id="RHEA:13825"/>
        <dbReference type="ChEBI" id="CHEBI:15378"/>
        <dbReference type="ChEBI" id="CHEBI:57540"/>
        <dbReference type="ChEBI" id="CHEBI:57945"/>
        <dbReference type="ChEBI" id="CHEBI:57964"/>
        <dbReference type="ChEBI" id="CHEBI:58224"/>
        <dbReference type="EC" id="1.1.1.281"/>
    </reaction>
</comment>
<comment type="catalytic activity">
    <reaction evidence="1 2">
        <text>GDP-alpha-D-rhamnose + NADP(+) = GDP-4-dehydro-alpha-D-rhamnose + NADPH + H(+)</text>
        <dbReference type="Rhea" id="RHEA:13829"/>
        <dbReference type="ChEBI" id="CHEBI:15378"/>
        <dbReference type="ChEBI" id="CHEBI:57783"/>
        <dbReference type="ChEBI" id="CHEBI:57964"/>
        <dbReference type="ChEBI" id="CHEBI:58224"/>
        <dbReference type="ChEBI" id="CHEBI:58349"/>
        <dbReference type="EC" id="1.1.1.281"/>
    </reaction>
</comment>
<comment type="similarity">
    <text evidence="3">Belongs to the NAD(P)-dependent epimerase/dehydratase family. GDP-6-deoxy-D-mannose reductase subfamily.</text>
</comment>
<name>RMD_ANETH</name>
<proteinExistence type="evidence at protein level"/>
<dbReference type="EC" id="1.1.1.281"/>
<dbReference type="EMBL" id="AY442352">
    <property type="protein sequence ID" value="AAS55712.1"/>
    <property type="molecule type" value="Genomic_DNA"/>
</dbReference>
<dbReference type="RefSeq" id="WP_057897460.1">
    <property type="nucleotide sequence ID" value="NZ_JARLWA010000002.1"/>
</dbReference>
<dbReference type="PDB" id="2PK3">
    <property type="method" value="X-ray"/>
    <property type="resolution" value="1.82 A"/>
    <property type="chains" value="A/B=1-309"/>
</dbReference>
<dbReference type="PDBsum" id="2PK3"/>
<dbReference type="SMR" id="Q6T1X6"/>
<dbReference type="KEGG" id="ag:AAS55712"/>
<dbReference type="OrthoDB" id="9779041at2"/>
<dbReference type="EvolutionaryTrace" id="Q6T1X6"/>
<dbReference type="GO" id="GO:0033705">
    <property type="term" value="F:GDP-4-dehydro-6-deoxy-D-mannose reductase activity"/>
    <property type="evidence" value="ECO:0000314"/>
    <property type="project" value="UniProtKB"/>
</dbReference>
<dbReference type="GO" id="GO:0016491">
    <property type="term" value="F:oxidoreductase activity"/>
    <property type="evidence" value="ECO:0000314"/>
    <property type="project" value="UniProtKB"/>
</dbReference>
<dbReference type="CDD" id="cd05260">
    <property type="entry name" value="GDP_MD_SDR_e"/>
    <property type="match status" value="1"/>
</dbReference>
<dbReference type="Gene3D" id="3.40.50.720">
    <property type="entry name" value="NAD(P)-binding Rossmann-like Domain"/>
    <property type="match status" value="1"/>
</dbReference>
<dbReference type="Gene3D" id="3.90.25.10">
    <property type="entry name" value="UDP-galactose 4-epimerase, domain 1"/>
    <property type="match status" value="1"/>
</dbReference>
<dbReference type="InterPro" id="IPR016040">
    <property type="entry name" value="NAD(P)-bd_dom"/>
</dbReference>
<dbReference type="InterPro" id="IPR036291">
    <property type="entry name" value="NAD(P)-bd_dom_sf"/>
</dbReference>
<dbReference type="PANTHER" id="PTHR43000">
    <property type="entry name" value="DTDP-D-GLUCOSE 4,6-DEHYDRATASE-RELATED"/>
    <property type="match status" value="1"/>
</dbReference>
<dbReference type="Pfam" id="PF16363">
    <property type="entry name" value="GDP_Man_Dehyd"/>
    <property type="match status" value="1"/>
</dbReference>
<dbReference type="SUPFAM" id="SSF51735">
    <property type="entry name" value="NAD(P)-binding Rossmann-fold domains"/>
    <property type="match status" value="1"/>
</dbReference>
<protein>
    <recommendedName>
        <fullName>GDP-6-deoxy-D-mannose reductase</fullName>
        <ecNumber>1.1.1.281</ecNumber>
    </recommendedName>
</protein>
<gene>
    <name type="primary">rmd</name>
</gene>
<evidence type="ECO:0000269" key="1">
    <source>
    </source>
</evidence>
<evidence type="ECO:0000269" key="2">
    <source>
    </source>
</evidence>
<evidence type="ECO:0000305" key="3"/>
<evidence type="ECO:0007829" key="4">
    <source>
        <dbReference type="PDB" id="2PK3"/>
    </source>
</evidence>
<sequence length="309" mass="34556">MRALITGVAGFVGKYLANHLTEQNVEVFGTSRNNEAKLPNVEMISLDIMDSQRVKKVISDIKPDYIFHLAAKSSVKDSWLNKKGTFSTNVFGTLHVLDAVRDSNLDCRILTIGSSEEYGMILPEESPVSEENQLRPMSPYGVSKASVGMLARQYVKAYGMDIIHTRTFNHIGPGQSLGFVTQDFAKQIVDIEMEKQEPIIKVGNLEAVRDFTDVRDIVQAYWLLSQYGKTGDVYNVCSGIGTRIQDVLDLLLAMANVKIDTELNPLQLRPSEVPTLIGSNKRLKDSTGWKPRIPLEKSLFEILQSYRQA</sequence>
<keyword id="KW-0002">3D-structure</keyword>
<keyword id="KW-0520">NAD</keyword>
<keyword id="KW-0521">NADP</keyword>
<keyword id="KW-0560">Oxidoreductase</keyword>
<organism>
    <name type="scientific">Aneurinibacillus thermoaerophilus</name>
    <dbReference type="NCBI Taxonomy" id="143495"/>
    <lineage>
        <taxon>Bacteria</taxon>
        <taxon>Bacillati</taxon>
        <taxon>Bacillota</taxon>
        <taxon>Bacilli</taxon>
        <taxon>Bacillales</taxon>
        <taxon>Paenibacillaceae</taxon>
        <taxon>Aneurinibacillus group</taxon>
        <taxon>Aneurinibacillus</taxon>
    </lineage>
</organism>
<reference key="1">
    <citation type="journal article" date="2001" name="J. Biol. Chem.">
        <title>Identification of two GDP-6-deoxy-D-lyxo-4-hexulose reductases synthesizing GDP-D-rhamnose in Aneurinibacillus thermoaerophilus L420-91T.</title>
        <authorList>
            <person name="Kneidinger B."/>
            <person name="Graninger M."/>
            <person name="Adam G."/>
            <person name="Puchberger M."/>
            <person name="Kosma P."/>
            <person name="Zayni S."/>
            <person name="Messner P."/>
        </authorList>
    </citation>
    <scope>NUCLEOTIDE SEQUENCE [GENOMIC DNA]</scope>
    <scope>FUNCTION</scope>
    <scope>CATALYTIC ACTIVITY</scope>
    <source>
        <strain>L420-91T</strain>
    </source>
</reference>
<reference key="2">
    <citation type="journal article" date="2009" name="FEBS J.">
        <title>The structural basis for catalytic function of GMD and RMD, two closely related enzymes from the GDP-D-rhamnose biosynthesis pathway.</title>
        <authorList>
            <person name="King J.D."/>
            <person name="Poon K.K.H."/>
            <person name="Webb N.A."/>
            <person name="Anderson E.M."/>
            <person name="McNally D.J."/>
            <person name="Brisson J.-R."/>
            <person name="Messner P."/>
            <person name="Garavito R.M."/>
            <person name="Lam J.S."/>
        </authorList>
    </citation>
    <scope>X-RAY CRYSTALLOGRAPHY (1.82 ANGSTROMS) IN COMPLEX WITH SUBSTRATE AND NADP ANALOG</scope>
    <scope>FUNCTION</scope>
    <scope>CATALYTIC ACTIVITY</scope>
</reference>
<feature type="chain" id="PRO_0000419037" description="GDP-6-deoxy-D-mannose reductase">
    <location>
        <begin position="1"/>
        <end position="309"/>
    </location>
</feature>
<feature type="binding site">
    <location>
        <begin position="11"/>
        <end position="12"/>
    </location>
    <ligand>
        <name>NADP(+)</name>
        <dbReference type="ChEBI" id="CHEBI:58349"/>
    </ligand>
</feature>
<feature type="binding site">
    <location>
        <position position="32"/>
    </location>
    <ligand>
        <name>NADP(+)</name>
        <dbReference type="ChEBI" id="CHEBI:58349"/>
    </ligand>
</feature>
<feature type="binding site">
    <location>
        <begin position="47"/>
        <end position="48"/>
    </location>
    <ligand>
        <name>NADP(+)</name>
        <dbReference type="ChEBI" id="CHEBI:58349"/>
    </ligand>
</feature>
<feature type="binding site">
    <location>
        <begin position="71"/>
        <end position="73"/>
    </location>
    <ligand>
        <name>NADP(+)</name>
        <dbReference type="ChEBI" id="CHEBI:58349"/>
    </ligand>
</feature>
<feature type="binding site">
    <location>
        <begin position="114"/>
        <end position="115"/>
    </location>
    <ligand>
        <name>substrate</name>
    </ligand>
</feature>
<feature type="binding site">
    <location>
        <position position="140"/>
    </location>
    <ligand>
        <name>NADP(+)</name>
        <dbReference type="ChEBI" id="CHEBI:58349"/>
    </ligand>
</feature>
<feature type="binding site" evidence="2">
    <location>
        <position position="169"/>
    </location>
    <ligand>
        <name>substrate</name>
    </ligand>
</feature>
<feature type="binding site" evidence="2">
    <location>
        <position position="183"/>
    </location>
    <ligand>
        <name>substrate</name>
    </ligand>
</feature>
<feature type="binding site" evidence="2">
    <location>
        <position position="209"/>
    </location>
    <ligand>
        <name>substrate</name>
    </ligand>
</feature>
<feature type="binding site">
    <location>
        <begin position="269"/>
        <end position="272"/>
    </location>
    <ligand>
        <name>substrate</name>
    </ligand>
</feature>
<feature type="strand" evidence="4">
    <location>
        <begin position="2"/>
        <end position="6"/>
    </location>
</feature>
<feature type="turn" evidence="4">
    <location>
        <begin position="7"/>
        <end position="9"/>
    </location>
</feature>
<feature type="helix" evidence="4">
    <location>
        <begin position="11"/>
        <end position="22"/>
    </location>
</feature>
<feature type="strand" evidence="4">
    <location>
        <begin position="26"/>
        <end position="32"/>
    </location>
</feature>
<feature type="strand" evidence="4">
    <location>
        <begin position="41"/>
        <end position="45"/>
    </location>
</feature>
<feature type="helix" evidence="4">
    <location>
        <begin position="51"/>
        <end position="61"/>
    </location>
</feature>
<feature type="strand" evidence="4">
    <location>
        <begin position="64"/>
        <end position="68"/>
    </location>
</feature>
<feature type="helix" evidence="4">
    <location>
        <begin position="75"/>
        <end position="78"/>
    </location>
</feature>
<feature type="helix" evidence="4">
    <location>
        <begin position="82"/>
        <end position="103"/>
    </location>
</feature>
<feature type="strand" evidence="4">
    <location>
        <begin position="108"/>
        <end position="114"/>
    </location>
</feature>
<feature type="helix" evidence="4">
    <location>
        <begin position="115"/>
        <end position="117"/>
    </location>
</feature>
<feature type="helix" evidence="4">
    <location>
        <begin position="123"/>
        <end position="125"/>
    </location>
</feature>
<feature type="helix" evidence="4">
    <location>
        <begin position="139"/>
        <end position="158"/>
    </location>
</feature>
<feature type="strand" evidence="4">
    <location>
        <begin position="161"/>
        <end position="167"/>
    </location>
</feature>
<feature type="strand" evidence="4">
    <location>
        <begin position="169"/>
        <end position="171"/>
    </location>
</feature>
<feature type="helix" evidence="4">
    <location>
        <begin position="180"/>
        <end position="192"/>
    </location>
</feature>
<feature type="strand" evidence="4">
    <location>
        <begin position="198"/>
        <end position="203"/>
    </location>
</feature>
<feature type="strand" evidence="4">
    <location>
        <begin position="208"/>
        <end position="213"/>
    </location>
</feature>
<feature type="helix" evidence="4">
    <location>
        <begin position="214"/>
        <end position="227"/>
    </location>
</feature>
<feature type="strand" evidence="4">
    <location>
        <begin position="233"/>
        <end position="237"/>
    </location>
</feature>
<feature type="strand" evidence="4">
    <location>
        <begin position="241"/>
        <end position="243"/>
    </location>
</feature>
<feature type="helix" evidence="4">
    <location>
        <begin position="244"/>
        <end position="254"/>
    </location>
</feature>
<feature type="strand" evidence="4">
    <location>
        <begin position="255"/>
        <end position="257"/>
    </location>
</feature>
<feature type="strand" evidence="4">
    <location>
        <begin position="260"/>
        <end position="263"/>
    </location>
</feature>
<feature type="helix" evidence="4">
    <location>
        <begin position="265"/>
        <end position="267"/>
    </location>
</feature>
<feature type="helix" evidence="4">
    <location>
        <begin position="281"/>
        <end position="287"/>
    </location>
</feature>
<feature type="helix" evidence="4">
    <location>
        <begin position="295"/>
        <end position="307"/>
    </location>
</feature>